<reference key="1">
    <citation type="journal article" date="1996" name="J. Mammal. Evol.">
        <title>Relationships among didelphid marsupials based on sequence variation in the mitochondrial cytochrome b gene.</title>
        <authorList>
            <person name="Patton J.L."/>
            <person name="dos Reis Maria S.F."/>
            <person name="da Silva N.F."/>
        </authorList>
    </citation>
    <scope>NUCLEOTIDE SEQUENCE [GENOMIC DNA]</scope>
</reference>
<sequence>MTNIRKTHPLMKIINDSFIDLPTPSNISAWWNFGSLLGMCLIIQILTGLFLAMHYTSDTLTAFSSVAHICRDVNYGWLIRNIHANGASMFFMCLFLHVGRGIYYGSYLYKETWNIGVILLLTVMATAFVGYVLPWGQMSFWGATVITNLLSAIPYIGNTLVEWIWGGFSVDKATLTRFFAFHFILPFIILAMVVVHLLFLHETGSNNPTGLDPNSDKIPFHPYYTIKDILGLFLMIIILLSLAMFSPDLLGDPDNFTPANPLNTPPHIKPEWYFLFAYAILRSIPNKLGGVLALLASILILLIMPLLHTSTQRSMMFRPISQTLFWMLTANLIILTWIGGQPVEQPYISIGQWASISYFTIIIILMPLAGTLENYMLKPKFP</sequence>
<comment type="function">
    <text evidence="2">Component of the ubiquinol-cytochrome c reductase complex (complex III or cytochrome b-c1 complex) that is part of the mitochondrial respiratory chain. The b-c1 complex mediates electron transfer from ubiquinol to cytochrome c. Contributes to the generation of a proton gradient across the mitochondrial membrane that is then used for ATP synthesis.</text>
</comment>
<comment type="cofactor">
    <cofactor evidence="2">
        <name>heme b</name>
        <dbReference type="ChEBI" id="CHEBI:60344"/>
    </cofactor>
    <text evidence="2">Binds 2 heme b groups non-covalently.</text>
</comment>
<comment type="subunit">
    <text evidence="2">The cytochrome bc1 complex contains 11 subunits: 3 respiratory subunits (MT-CYB, CYC1 and UQCRFS1), 2 core proteins (UQCRC1 and UQCRC2) and 6 low-molecular weight proteins (UQCRH/QCR6, UQCRB/QCR7, UQCRQ/QCR8, UQCR10/QCR9, UQCR11/QCR10 and a cleavage product of UQCRFS1). This cytochrome bc1 complex then forms a dimer.</text>
</comment>
<comment type="subcellular location">
    <subcellularLocation>
        <location evidence="2">Mitochondrion inner membrane</location>
        <topology evidence="2">Multi-pass membrane protein</topology>
    </subcellularLocation>
</comment>
<comment type="miscellaneous">
    <text evidence="1">Heme 1 (or BL or b562) is low-potential and absorbs at about 562 nm, and heme 2 (or BH or b566) is high-potential and absorbs at about 566 nm.</text>
</comment>
<comment type="similarity">
    <text evidence="3 4">Belongs to the cytochrome b family.</text>
</comment>
<comment type="caution">
    <text evidence="2">The full-length protein contains only eight transmembrane helices, not nine as predicted by bioinformatics tools.</text>
</comment>
<keyword id="KW-0249">Electron transport</keyword>
<keyword id="KW-0349">Heme</keyword>
<keyword id="KW-0408">Iron</keyword>
<keyword id="KW-0472">Membrane</keyword>
<keyword id="KW-0479">Metal-binding</keyword>
<keyword id="KW-0496">Mitochondrion</keyword>
<keyword id="KW-0999">Mitochondrion inner membrane</keyword>
<keyword id="KW-0679">Respiratory chain</keyword>
<keyword id="KW-0812">Transmembrane</keyword>
<keyword id="KW-1133">Transmembrane helix</keyword>
<keyword id="KW-0813">Transport</keyword>
<keyword id="KW-0830">Ubiquinone</keyword>
<name>CYB_DIDMR</name>
<proteinExistence type="inferred from homology"/>
<geneLocation type="mitochondrion"/>
<protein>
    <recommendedName>
        <fullName>Cytochrome b</fullName>
    </recommendedName>
    <alternativeName>
        <fullName>Complex III subunit 3</fullName>
    </alternativeName>
    <alternativeName>
        <fullName>Complex III subunit III</fullName>
    </alternativeName>
    <alternativeName>
        <fullName>Cytochrome b-c1 complex subunit 3</fullName>
    </alternativeName>
    <alternativeName>
        <fullName>Ubiquinol-cytochrome-c reductase complex cytochrome b subunit</fullName>
    </alternativeName>
</protein>
<feature type="chain" id="PRO_0000254797" description="Cytochrome b">
    <location>
        <begin position="1"/>
        <end position="382"/>
    </location>
</feature>
<feature type="transmembrane region" description="Helical" evidence="2">
    <location>
        <begin position="33"/>
        <end position="53"/>
    </location>
</feature>
<feature type="transmembrane region" description="Helical" evidence="2">
    <location>
        <begin position="77"/>
        <end position="98"/>
    </location>
</feature>
<feature type="transmembrane region" description="Helical" evidence="2">
    <location>
        <begin position="113"/>
        <end position="133"/>
    </location>
</feature>
<feature type="transmembrane region" description="Helical" evidence="2">
    <location>
        <begin position="178"/>
        <end position="198"/>
    </location>
</feature>
<feature type="transmembrane region" description="Helical" evidence="2">
    <location>
        <begin position="226"/>
        <end position="246"/>
    </location>
</feature>
<feature type="transmembrane region" description="Helical" evidence="2">
    <location>
        <begin position="288"/>
        <end position="308"/>
    </location>
</feature>
<feature type="transmembrane region" description="Helical" evidence="2">
    <location>
        <begin position="320"/>
        <end position="340"/>
    </location>
</feature>
<feature type="transmembrane region" description="Helical" evidence="2">
    <location>
        <begin position="347"/>
        <end position="367"/>
    </location>
</feature>
<feature type="binding site" description="axial binding residue" evidence="2">
    <location>
        <position position="83"/>
    </location>
    <ligand>
        <name>heme b</name>
        <dbReference type="ChEBI" id="CHEBI:60344"/>
        <label>b562</label>
    </ligand>
    <ligandPart>
        <name>Fe</name>
        <dbReference type="ChEBI" id="CHEBI:18248"/>
    </ligandPart>
</feature>
<feature type="binding site" description="axial binding residue" evidence="2">
    <location>
        <position position="97"/>
    </location>
    <ligand>
        <name>heme b</name>
        <dbReference type="ChEBI" id="CHEBI:60344"/>
        <label>b566</label>
    </ligand>
    <ligandPart>
        <name>Fe</name>
        <dbReference type="ChEBI" id="CHEBI:18248"/>
    </ligandPart>
</feature>
<feature type="binding site" description="axial binding residue" evidence="2">
    <location>
        <position position="182"/>
    </location>
    <ligand>
        <name>heme b</name>
        <dbReference type="ChEBI" id="CHEBI:60344"/>
        <label>b562</label>
    </ligand>
    <ligandPart>
        <name>Fe</name>
        <dbReference type="ChEBI" id="CHEBI:18248"/>
    </ligandPart>
</feature>
<feature type="binding site" description="axial binding residue" evidence="2">
    <location>
        <position position="196"/>
    </location>
    <ligand>
        <name>heme b</name>
        <dbReference type="ChEBI" id="CHEBI:60344"/>
        <label>b566</label>
    </ligand>
    <ligandPart>
        <name>Fe</name>
        <dbReference type="ChEBI" id="CHEBI:18248"/>
    </ligandPart>
</feature>
<feature type="binding site" evidence="2">
    <location>
        <position position="201"/>
    </location>
    <ligand>
        <name>a ubiquinone</name>
        <dbReference type="ChEBI" id="CHEBI:16389"/>
    </ligand>
</feature>
<dbReference type="EMBL" id="U34665">
    <property type="protein sequence ID" value="AAA99746.1"/>
    <property type="molecule type" value="Genomic_DNA"/>
</dbReference>
<dbReference type="SMR" id="Q34340"/>
<dbReference type="GO" id="GO:0005743">
    <property type="term" value="C:mitochondrial inner membrane"/>
    <property type="evidence" value="ECO:0007669"/>
    <property type="project" value="UniProtKB-SubCell"/>
</dbReference>
<dbReference type="GO" id="GO:0045275">
    <property type="term" value="C:respiratory chain complex III"/>
    <property type="evidence" value="ECO:0007669"/>
    <property type="project" value="InterPro"/>
</dbReference>
<dbReference type="GO" id="GO:0046872">
    <property type="term" value="F:metal ion binding"/>
    <property type="evidence" value="ECO:0007669"/>
    <property type="project" value="UniProtKB-KW"/>
</dbReference>
<dbReference type="GO" id="GO:0008121">
    <property type="term" value="F:ubiquinol-cytochrome-c reductase activity"/>
    <property type="evidence" value="ECO:0007669"/>
    <property type="project" value="InterPro"/>
</dbReference>
<dbReference type="GO" id="GO:0006122">
    <property type="term" value="P:mitochondrial electron transport, ubiquinol to cytochrome c"/>
    <property type="evidence" value="ECO:0007669"/>
    <property type="project" value="TreeGrafter"/>
</dbReference>
<dbReference type="CDD" id="cd00290">
    <property type="entry name" value="cytochrome_b_C"/>
    <property type="match status" value="1"/>
</dbReference>
<dbReference type="CDD" id="cd00284">
    <property type="entry name" value="Cytochrome_b_N"/>
    <property type="match status" value="1"/>
</dbReference>
<dbReference type="FunFam" id="1.20.810.10:FF:000002">
    <property type="entry name" value="Cytochrome b"/>
    <property type="match status" value="1"/>
</dbReference>
<dbReference type="Gene3D" id="1.20.810.10">
    <property type="entry name" value="Cytochrome Bc1 Complex, Chain C"/>
    <property type="match status" value="1"/>
</dbReference>
<dbReference type="InterPro" id="IPR005798">
    <property type="entry name" value="Cyt_b/b6_C"/>
</dbReference>
<dbReference type="InterPro" id="IPR036150">
    <property type="entry name" value="Cyt_b/b6_C_sf"/>
</dbReference>
<dbReference type="InterPro" id="IPR005797">
    <property type="entry name" value="Cyt_b/b6_N"/>
</dbReference>
<dbReference type="InterPro" id="IPR027387">
    <property type="entry name" value="Cytb/b6-like_sf"/>
</dbReference>
<dbReference type="InterPro" id="IPR030689">
    <property type="entry name" value="Cytochrome_b"/>
</dbReference>
<dbReference type="InterPro" id="IPR048260">
    <property type="entry name" value="Cytochrome_b_C_euk/bac"/>
</dbReference>
<dbReference type="InterPro" id="IPR048259">
    <property type="entry name" value="Cytochrome_b_N_euk/bac"/>
</dbReference>
<dbReference type="InterPro" id="IPR016174">
    <property type="entry name" value="Di-haem_cyt_TM"/>
</dbReference>
<dbReference type="PANTHER" id="PTHR19271">
    <property type="entry name" value="CYTOCHROME B"/>
    <property type="match status" value="1"/>
</dbReference>
<dbReference type="PANTHER" id="PTHR19271:SF16">
    <property type="entry name" value="CYTOCHROME B"/>
    <property type="match status" value="1"/>
</dbReference>
<dbReference type="Pfam" id="PF00032">
    <property type="entry name" value="Cytochrom_B_C"/>
    <property type="match status" value="1"/>
</dbReference>
<dbReference type="Pfam" id="PF00033">
    <property type="entry name" value="Cytochrome_B"/>
    <property type="match status" value="1"/>
</dbReference>
<dbReference type="PIRSF" id="PIRSF038885">
    <property type="entry name" value="COB"/>
    <property type="match status" value="1"/>
</dbReference>
<dbReference type="SUPFAM" id="SSF81648">
    <property type="entry name" value="a domain/subunit of cytochrome bc1 complex (Ubiquinol-cytochrome c reductase)"/>
    <property type="match status" value="1"/>
</dbReference>
<dbReference type="SUPFAM" id="SSF81342">
    <property type="entry name" value="Transmembrane di-heme cytochromes"/>
    <property type="match status" value="1"/>
</dbReference>
<dbReference type="PROSITE" id="PS51003">
    <property type="entry name" value="CYTB_CTER"/>
    <property type="match status" value="1"/>
</dbReference>
<dbReference type="PROSITE" id="PS51002">
    <property type="entry name" value="CYTB_NTER"/>
    <property type="match status" value="1"/>
</dbReference>
<evidence type="ECO:0000250" key="1"/>
<evidence type="ECO:0000250" key="2">
    <source>
        <dbReference type="UniProtKB" id="P00157"/>
    </source>
</evidence>
<evidence type="ECO:0000255" key="3">
    <source>
        <dbReference type="PROSITE-ProRule" id="PRU00967"/>
    </source>
</evidence>
<evidence type="ECO:0000255" key="4">
    <source>
        <dbReference type="PROSITE-ProRule" id="PRU00968"/>
    </source>
</evidence>
<accession>Q34340</accession>
<gene>
    <name type="primary">MT-CYB</name>
    <name type="synonym">COB</name>
    <name type="synonym">CYTB</name>
    <name type="synonym">MTCYB</name>
</gene>
<organism>
    <name type="scientific">Didelphis marsupialis</name>
    <name type="common">Southern opossum</name>
    <dbReference type="NCBI Taxonomy" id="9268"/>
    <lineage>
        <taxon>Eukaryota</taxon>
        <taxon>Metazoa</taxon>
        <taxon>Chordata</taxon>
        <taxon>Craniata</taxon>
        <taxon>Vertebrata</taxon>
        <taxon>Euteleostomi</taxon>
        <taxon>Mammalia</taxon>
        <taxon>Metatheria</taxon>
        <taxon>Didelphimorphia</taxon>
        <taxon>Didelphidae</taxon>
        <taxon>Didelphis</taxon>
    </lineage>
</organism>